<accession>Q57RU1</accession>
<dbReference type="EC" id="2.3.1.181" evidence="1"/>
<dbReference type="EMBL" id="AE017220">
    <property type="protein sequence ID" value="AAX64570.1"/>
    <property type="molecule type" value="Genomic_DNA"/>
</dbReference>
<dbReference type="SMR" id="Q57RU1"/>
<dbReference type="KEGG" id="sec:SCH_0664"/>
<dbReference type="HOGENOM" id="CLU_035168_3_1_6"/>
<dbReference type="UniPathway" id="UPA00538">
    <property type="reaction ID" value="UER00592"/>
</dbReference>
<dbReference type="Proteomes" id="UP000000538">
    <property type="component" value="Chromosome"/>
</dbReference>
<dbReference type="GO" id="GO:0005737">
    <property type="term" value="C:cytoplasm"/>
    <property type="evidence" value="ECO:0007669"/>
    <property type="project" value="UniProtKB-SubCell"/>
</dbReference>
<dbReference type="GO" id="GO:0033819">
    <property type="term" value="F:lipoyl(octanoyl) transferase activity"/>
    <property type="evidence" value="ECO:0007669"/>
    <property type="project" value="UniProtKB-EC"/>
</dbReference>
<dbReference type="GO" id="GO:0036211">
    <property type="term" value="P:protein modification process"/>
    <property type="evidence" value="ECO:0007669"/>
    <property type="project" value="InterPro"/>
</dbReference>
<dbReference type="CDD" id="cd16444">
    <property type="entry name" value="LipB"/>
    <property type="match status" value="1"/>
</dbReference>
<dbReference type="FunFam" id="3.30.930.10:FF:000020">
    <property type="entry name" value="Octanoyltransferase"/>
    <property type="match status" value="1"/>
</dbReference>
<dbReference type="Gene3D" id="3.30.930.10">
    <property type="entry name" value="Bira Bifunctional Protein, Domain 2"/>
    <property type="match status" value="1"/>
</dbReference>
<dbReference type="HAMAP" id="MF_00013">
    <property type="entry name" value="LipB"/>
    <property type="match status" value="1"/>
</dbReference>
<dbReference type="InterPro" id="IPR045864">
    <property type="entry name" value="aa-tRNA-synth_II/BPL/LPL"/>
</dbReference>
<dbReference type="InterPro" id="IPR004143">
    <property type="entry name" value="BPL_LPL_catalytic"/>
</dbReference>
<dbReference type="InterPro" id="IPR000544">
    <property type="entry name" value="Octanoyltransferase"/>
</dbReference>
<dbReference type="InterPro" id="IPR020605">
    <property type="entry name" value="Octanoyltransferase_CS"/>
</dbReference>
<dbReference type="NCBIfam" id="TIGR00214">
    <property type="entry name" value="lipB"/>
    <property type="match status" value="1"/>
</dbReference>
<dbReference type="NCBIfam" id="NF010922">
    <property type="entry name" value="PRK14342.1"/>
    <property type="match status" value="1"/>
</dbReference>
<dbReference type="PANTHER" id="PTHR10993:SF7">
    <property type="entry name" value="LIPOYLTRANSFERASE 2, MITOCHONDRIAL-RELATED"/>
    <property type="match status" value="1"/>
</dbReference>
<dbReference type="PANTHER" id="PTHR10993">
    <property type="entry name" value="OCTANOYLTRANSFERASE"/>
    <property type="match status" value="1"/>
</dbReference>
<dbReference type="Pfam" id="PF21948">
    <property type="entry name" value="LplA-B_cat"/>
    <property type="match status" value="1"/>
</dbReference>
<dbReference type="PIRSF" id="PIRSF016262">
    <property type="entry name" value="LPLase"/>
    <property type="match status" value="1"/>
</dbReference>
<dbReference type="SUPFAM" id="SSF55681">
    <property type="entry name" value="Class II aaRS and biotin synthetases"/>
    <property type="match status" value="1"/>
</dbReference>
<dbReference type="PROSITE" id="PS51733">
    <property type="entry name" value="BPL_LPL_CATALYTIC"/>
    <property type="match status" value="1"/>
</dbReference>
<dbReference type="PROSITE" id="PS01313">
    <property type="entry name" value="LIPB"/>
    <property type="match status" value="1"/>
</dbReference>
<name>LIPB_SALCH</name>
<feature type="chain" id="PRO_0000242763" description="Octanoyltransferase">
    <location>
        <begin position="1"/>
        <end position="191"/>
    </location>
</feature>
<feature type="domain" description="BPL/LPL catalytic" evidence="2">
    <location>
        <begin position="10"/>
        <end position="185"/>
    </location>
</feature>
<feature type="active site" description="Acyl-thioester intermediate" evidence="1">
    <location>
        <position position="147"/>
    </location>
</feature>
<feature type="binding site" evidence="1">
    <location>
        <begin position="49"/>
        <end position="56"/>
    </location>
    <ligand>
        <name>substrate</name>
    </ligand>
</feature>
<feature type="binding site" evidence="1">
    <location>
        <begin position="116"/>
        <end position="118"/>
    </location>
    <ligand>
        <name>substrate</name>
    </ligand>
</feature>
<feature type="binding site" evidence="1">
    <location>
        <begin position="129"/>
        <end position="131"/>
    </location>
    <ligand>
        <name>substrate</name>
    </ligand>
</feature>
<feature type="site" description="Lowers pKa of active site Cys" evidence="1">
    <location>
        <position position="113"/>
    </location>
</feature>
<comment type="function">
    <text evidence="1">Catalyzes the transfer of endogenously produced octanoic acid from octanoyl-acyl-carrier-protein onto the lipoyl domains of lipoate-dependent enzymes. Lipoyl-ACP can also act as a substrate although octanoyl-ACP is likely to be the physiological substrate.</text>
</comment>
<comment type="catalytic activity">
    <reaction evidence="1">
        <text>octanoyl-[ACP] + L-lysyl-[protein] = N(6)-octanoyl-L-lysyl-[protein] + holo-[ACP] + H(+)</text>
        <dbReference type="Rhea" id="RHEA:17665"/>
        <dbReference type="Rhea" id="RHEA-COMP:9636"/>
        <dbReference type="Rhea" id="RHEA-COMP:9685"/>
        <dbReference type="Rhea" id="RHEA-COMP:9752"/>
        <dbReference type="Rhea" id="RHEA-COMP:9928"/>
        <dbReference type="ChEBI" id="CHEBI:15378"/>
        <dbReference type="ChEBI" id="CHEBI:29969"/>
        <dbReference type="ChEBI" id="CHEBI:64479"/>
        <dbReference type="ChEBI" id="CHEBI:78463"/>
        <dbReference type="ChEBI" id="CHEBI:78809"/>
        <dbReference type="EC" id="2.3.1.181"/>
    </reaction>
</comment>
<comment type="pathway">
    <text evidence="1">Protein modification; protein lipoylation via endogenous pathway; protein N(6)-(lipoyl)lysine from octanoyl-[acyl-carrier-protein]: step 1/2.</text>
</comment>
<comment type="subcellular location">
    <subcellularLocation>
        <location evidence="1">Cytoplasm</location>
    </subcellularLocation>
</comment>
<comment type="miscellaneous">
    <text evidence="1">In the reaction, the free carboxyl group of octanoic acid is attached via an amide linkage to the epsilon-amino group of a specific lysine residue of lipoyl domains of lipoate-dependent enzymes.</text>
</comment>
<comment type="similarity">
    <text evidence="1">Belongs to the LipB family.</text>
</comment>
<proteinExistence type="inferred from homology"/>
<reference key="1">
    <citation type="journal article" date="2005" name="Nucleic Acids Res.">
        <title>The genome sequence of Salmonella enterica serovar Choleraesuis, a highly invasive and resistant zoonotic pathogen.</title>
        <authorList>
            <person name="Chiu C.-H."/>
            <person name="Tang P."/>
            <person name="Chu C."/>
            <person name="Hu S."/>
            <person name="Bao Q."/>
            <person name="Yu J."/>
            <person name="Chou Y.-Y."/>
            <person name="Wang H.-S."/>
            <person name="Lee Y.-S."/>
        </authorList>
    </citation>
    <scope>NUCLEOTIDE SEQUENCE [LARGE SCALE GENOMIC DNA]</scope>
    <source>
        <strain>SC-B67</strain>
    </source>
</reference>
<sequence length="191" mass="21291">MHNFTDMRDENSHDEIWLVEHYPVFTQGQAGKAEHILMPGDIPVVQSDRGGQVTYHGPGQQVMYVLLNLKRRKLGVRDLVTLLEQTVVNTLAEIGIEAHPRADAPGVYVGEKKICSLGLRIRRGCSFHGLALNVNMDLSPFLRINPCGYAGMEMAKITQWKEDATTDNIAPRLLANILALLNNPPYEYIAA</sequence>
<keyword id="KW-0012">Acyltransferase</keyword>
<keyword id="KW-0963">Cytoplasm</keyword>
<keyword id="KW-0808">Transferase</keyword>
<gene>
    <name evidence="1" type="primary">lipB</name>
    <name type="ordered locus">SCH_0664</name>
</gene>
<protein>
    <recommendedName>
        <fullName evidence="1">Octanoyltransferase</fullName>
        <ecNumber evidence="1">2.3.1.181</ecNumber>
    </recommendedName>
    <alternativeName>
        <fullName evidence="1">Lipoate-protein ligase B</fullName>
    </alternativeName>
    <alternativeName>
        <fullName evidence="1">Lipoyl/octanoyl transferase</fullName>
    </alternativeName>
    <alternativeName>
        <fullName evidence="1">Octanoyl-[acyl-carrier-protein]-protein N-octanoyltransferase</fullName>
    </alternativeName>
</protein>
<organism>
    <name type="scientific">Salmonella choleraesuis (strain SC-B67)</name>
    <dbReference type="NCBI Taxonomy" id="321314"/>
    <lineage>
        <taxon>Bacteria</taxon>
        <taxon>Pseudomonadati</taxon>
        <taxon>Pseudomonadota</taxon>
        <taxon>Gammaproteobacteria</taxon>
        <taxon>Enterobacterales</taxon>
        <taxon>Enterobacteriaceae</taxon>
        <taxon>Salmonella</taxon>
    </lineage>
</organism>
<evidence type="ECO:0000255" key="1">
    <source>
        <dbReference type="HAMAP-Rule" id="MF_00013"/>
    </source>
</evidence>
<evidence type="ECO:0000255" key="2">
    <source>
        <dbReference type="PROSITE-ProRule" id="PRU01067"/>
    </source>
</evidence>